<reference key="1">
    <citation type="journal article" date="2007" name="Proc. Natl. Acad. Sci. U.S.A.">
        <title>Genome plasticity of BCG and impact on vaccine efficacy.</title>
        <authorList>
            <person name="Brosch R."/>
            <person name="Gordon S.V."/>
            <person name="Garnier T."/>
            <person name="Eiglmeier K."/>
            <person name="Frigui W."/>
            <person name="Valenti P."/>
            <person name="Dos Santos S."/>
            <person name="Duthoy S."/>
            <person name="Lacroix C."/>
            <person name="Garcia-Pelayo C."/>
            <person name="Inwald J.K."/>
            <person name="Golby P."/>
            <person name="Garcia J.N."/>
            <person name="Hewinson R.G."/>
            <person name="Behr M.A."/>
            <person name="Quail M.A."/>
            <person name="Churcher C."/>
            <person name="Barrell B.G."/>
            <person name="Parkhill J."/>
            <person name="Cole S.T."/>
        </authorList>
    </citation>
    <scope>NUCLEOTIDE SEQUENCE [LARGE SCALE GENOMIC DNA]</scope>
    <source>
        <strain>BCG / Pasteur 1173P2</strain>
    </source>
</reference>
<name>GCH1_MYCBP</name>
<organism>
    <name type="scientific">Mycobacterium bovis (strain BCG / Pasteur 1173P2)</name>
    <dbReference type="NCBI Taxonomy" id="410289"/>
    <lineage>
        <taxon>Bacteria</taxon>
        <taxon>Bacillati</taxon>
        <taxon>Actinomycetota</taxon>
        <taxon>Actinomycetes</taxon>
        <taxon>Mycobacteriales</taxon>
        <taxon>Mycobacteriaceae</taxon>
        <taxon>Mycobacterium</taxon>
        <taxon>Mycobacterium tuberculosis complex</taxon>
    </lineage>
</organism>
<accession>A1KPU4</accession>
<gene>
    <name evidence="2" type="primary">folE</name>
    <name type="ordered locus">BCG_3673c</name>
</gene>
<protein>
    <recommendedName>
        <fullName evidence="2">GTP cyclohydrolase 1</fullName>
        <ecNumber evidence="2">3.5.4.16</ecNumber>
    </recommendedName>
    <alternativeName>
        <fullName evidence="2">GTP cyclohydrolase I</fullName>
        <shortName evidence="2">GTP-CH-I</shortName>
    </alternativeName>
</protein>
<evidence type="ECO:0000250" key="1"/>
<evidence type="ECO:0000255" key="2">
    <source>
        <dbReference type="HAMAP-Rule" id="MF_00223"/>
    </source>
</evidence>
<dbReference type="EC" id="3.5.4.16" evidence="2"/>
<dbReference type="EMBL" id="AM408590">
    <property type="protein sequence ID" value="CAL73662.1"/>
    <property type="molecule type" value="Genomic_DNA"/>
</dbReference>
<dbReference type="RefSeq" id="WP_003899597.1">
    <property type="nucleotide sequence ID" value="NC_008769.1"/>
</dbReference>
<dbReference type="SMR" id="A1KPU4"/>
<dbReference type="GeneID" id="45427595"/>
<dbReference type="KEGG" id="mbb:BCG_3673c"/>
<dbReference type="HOGENOM" id="CLU_049768_3_3_11"/>
<dbReference type="UniPathway" id="UPA00848">
    <property type="reaction ID" value="UER00151"/>
</dbReference>
<dbReference type="Proteomes" id="UP000001472">
    <property type="component" value="Chromosome"/>
</dbReference>
<dbReference type="GO" id="GO:0005737">
    <property type="term" value="C:cytoplasm"/>
    <property type="evidence" value="ECO:0007669"/>
    <property type="project" value="TreeGrafter"/>
</dbReference>
<dbReference type="GO" id="GO:0005525">
    <property type="term" value="F:GTP binding"/>
    <property type="evidence" value="ECO:0007669"/>
    <property type="project" value="UniProtKB-KW"/>
</dbReference>
<dbReference type="GO" id="GO:0003934">
    <property type="term" value="F:GTP cyclohydrolase I activity"/>
    <property type="evidence" value="ECO:0007669"/>
    <property type="project" value="UniProtKB-UniRule"/>
</dbReference>
<dbReference type="GO" id="GO:0008270">
    <property type="term" value="F:zinc ion binding"/>
    <property type="evidence" value="ECO:0007669"/>
    <property type="project" value="UniProtKB-UniRule"/>
</dbReference>
<dbReference type="GO" id="GO:0006730">
    <property type="term" value="P:one-carbon metabolic process"/>
    <property type="evidence" value="ECO:0007669"/>
    <property type="project" value="UniProtKB-UniRule"/>
</dbReference>
<dbReference type="GO" id="GO:0006729">
    <property type="term" value="P:tetrahydrobiopterin biosynthetic process"/>
    <property type="evidence" value="ECO:0007669"/>
    <property type="project" value="TreeGrafter"/>
</dbReference>
<dbReference type="GO" id="GO:0046654">
    <property type="term" value="P:tetrahydrofolate biosynthetic process"/>
    <property type="evidence" value="ECO:0007669"/>
    <property type="project" value="UniProtKB-UniRule"/>
</dbReference>
<dbReference type="FunFam" id="1.10.286.10:FF:000001">
    <property type="entry name" value="GTP cyclohydrolase 1"/>
    <property type="match status" value="1"/>
</dbReference>
<dbReference type="FunFam" id="3.30.1130.10:FF:000001">
    <property type="entry name" value="GTP cyclohydrolase 1"/>
    <property type="match status" value="1"/>
</dbReference>
<dbReference type="Gene3D" id="1.10.286.10">
    <property type="match status" value="1"/>
</dbReference>
<dbReference type="Gene3D" id="3.30.1130.10">
    <property type="match status" value="1"/>
</dbReference>
<dbReference type="HAMAP" id="MF_00223">
    <property type="entry name" value="FolE"/>
    <property type="match status" value="1"/>
</dbReference>
<dbReference type="InterPro" id="IPR043133">
    <property type="entry name" value="GTP-CH-I_C/QueF"/>
</dbReference>
<dbReference type="InterPro" id="IPR043134">
    <property type="entry name" value="GTP-CH-I_N"/>
</dbReference>
<dbReference type="InterPro" id="IPR001474">
    <property type="entry name" value="GTP_CycHdrlase_I"/>
</dbReference>
<dbReference type="InterPro" id="IPR018234">
    <property type="entry name" value="GTP_CycHdrlase_I_CS"/>
</dbReference>
<dbReference type="InterPro" id="IPR020602">
    <property type="entry name" value="GTP_CycHdrlase_I_dom"/>
</dbReference>
<dbReference type="NCBIfam" id="TIGR00063">
    <property type="entry name" value="folE"/>
    <property type="match status" value="1"/>
</dbReference>
<dbReference type="NCBIfam" id="NF006825">
    <property type="entry name" value="PRK09347.1-2"/>
    <property type="match status" value="1"/>
</dbReference>
<dbReference type="NCBIfam" id="NF006826">
    <property type="entry name" value="PRK09347.1-3"/>
    <property type="match status" value="1"/>
</dbReference>
<dbReference type="PANTHER" id="PTHR11109:SF7">
    <property type="entry name" value="GTP CYCLOHYDROLASE 1"/>
    <property type="match status" value="1"/>
</dbReference>
<dbReference type="PANTHER" id="PTHR11109">
    <property type="entry name" value="GTP CYCLOHYDROLASE I"/>
    <property type="match status" value="1"/>
</dbReference>
<dbReference type="Pfam" id="PF01227">
    <property type="entry name" value="GTP_cyclohydroI"/>
    <property type="match status" value="1"/>
</dbReference>
<dbReference type="SUPFAM" id="SSF55620">
    <property type="entry name" value="Tetrahydrobiopterin biosynthesis enzymes-like"/>
    <property type="match status" value="1"/>
</dbReference>
<dbReference type="PROSITE" id="PS00859">
    <property type="entry name" value="GTP_CYCLOHYDROL_1_1"/>
    <property type="match status" value="1"/>
</dbReference>
<dbReference type="PROSITE" id="PS00860">
    <property type="entry name" value="GTP_CYCLOHYDROL_1_2"/>
    <property type="match status" value="1"/>
</dbReference>
<sequence>MSQLDSRSASARIRVFDQQRAEAAVRELLYAIGEDPDRDGLVATPSRVARSYREMFAGLYTDPDSVLNTMFDEDHDELVLVKEIPMYSTCEHHLVAFHGVAHVGYIPGDDGRVTGLSKIARLVDLYAKRPQVQERLTSQIADALMKKLDPRGVIVVIEAEHLCMAMRGVRKPGSVTTTSAVRGLFKTNAASRAEALDLILRK</sequence>
<comment type="catalytic activity">
    <reaction evidence="2">
        <text>GTP + H2O = 7,8-dihydroneopterin 3'-triphosphate + formate + H(+)</text>
        <dbReference type="Rhea" id="RHEA:17473"/>
        <dbReference type="ChEBI" id="CHEBI:15377"/>
        <dbReference type="ChEBI" id="CHEBI:15378"/>
        <dbReference type="ChEBI" id="CHEBI:15740"/>
        <dbReference type="ChEBI" id="CHEBI:37565"/>
        <dbReference type="ChEBI" id="CHEBI:58462"/>
        <dbReference type="EC" id="3.5.4.16"/>
    </reaction>
</comment>
<comment type="pathway">
    <text evidence="2">Cofactor biosynthesis; 7,8-dihydroneopterin triphosphate biosynthesis; 7,8-dihydroneopterin triphosphate from GTP: step 1/1.</text>
</comment>
<comment type="subunit">
    <text evidence="1">Toroid-shaped homodecamer, composed of two pentamers of five dimers.</text>
</comment>
<comment type="similarity">
    <text evidence="2">Belongs to the GTP cyclohydrolase I family.</text>
</comment>
<feature type="chain" id="PRO_1000043710" description="GTP cyclohydrolase 1">
    <location>
        <begin position="1"/>
        <end position="202"/>
    </location>
</feature>
<feature type="binding site" evidence="2">
    <location>
        <position position="90"/>
    </location>
    <ligand>
        <name>Zn(2+)</name>
        <dbReference type="ChEBI" id="CHEBI:29105"/>
    </ligand>
</feature>
<feature type="binding site" evidence="2">
    <location>
        <position position="93"/>
    </location>
    <ligand>
        <name>Zn(2+)</name>
        <dbReference type="ChEBI" id="CHEBI:29105"/>
    </ligand>
</feature>
<feature type="binding site" evidence="2">
    <location>
        <position position="163"/>
    </location>
    <ligand>
        <name>Zn(2+)</name>
        <dbReference type="ChEBI" id="CHEBI:29105"/>
    </ligand>
</feature>
<keyword id="KW-0342">GTP-binding</keyword>
<keyword id="KW-0378">Hydrolase</keyword>
<keyword id="KW-0479">Metal-binding</keyword>
<keyword id="KW-0547">Nucleotide-binding</keyword>
<keyword id="KW-0554">One-carbon metabolism</keyword>
<keyword id="KW-0862">Zinc</keyword>
<proteinExistence type="inferred from homology"/>